<sequence>MPGIKEIRTKIKSVQNTRKITKAMEMVAASKMRKAQDRMRAGRPYATKVREIAAHLMQANPEYSHPYLVEREIKAVGVVLVTTDKGLCGGLNTNISRVTLAKLKEFDQRGIRVQATAFGNKGLGLLTRIGANLVSHEVQLGDKPDLDRLLGAIKVQLDAYLSGEIDALYVAATRFVNTMKQEPVFLRLLPLASGLDDPFQTGAETLADGAEVKSNYSWDYIYEPDAKSVIDDLLQRYVEGLLYQAVAENMASEQSARMVAMKAASDNAKKVIGDLQLVYNKTRQAAITKEISEIVGGAAAV</sequence>
<feature type="chain" id="PRO_1000134115" description="ATP synthase gamma chain">
    <location>
        <begin position="1"/>
        <end position="301"/>
    </location>
</feature>
<accession>A9HY41</accession>
<protein>
    <recommendedName>
        <fullName evidence="1">ATP synthase gamma chain</fullName>
    </recommendedName>
    <alternativeName>
        <fullName evidence="1">ATP synthase F1 sector gamma subunit</fullName>
    </alternativeName>
    <alternativeName>
        <fullName evidence="1">F-ATPase gamma subunit</fullName>
    </alternativeName>
</protein>
<evidence type="ECO:0000255" key="1">
    <source>
        <dbReference type="HAMAP-Rule" id="MF_00815"/>
    </source>
</evidence>
<comment type="function">
    <text evidence="1">Produces ATP from ADP in the presence of a proton gradient across the membrane. The gamma chain is believed to be important in regulating ATPase activity and the flow of protons through the CF(0) complex.</text>
</comment>
<comment type="subunit">
    <text evidence="1">F-type ATPases have 2 components, CF(1) - the catalytic core - and CF(0) - the membrane proton channel. CF(1) has five subunits: alpha(3), beta(3), gamma(1), delta(1), epsilon(1). CF(0) has three main subunits: a, b and c.</text>
</comment>
<comment type="subcellular location">
    <subcellularLocation>
        <location evidence="1">Cell inner membrane</location>
        <topology evidence="1">Peripheral membrane protein</topology>
    </subcellularLocation>
</comment>
<comment type="similarity">
    <text evidence="1">Belongs to the ATPase gamma chain family.</text>
</comment>
<reference key="1">
    <citation type="journal article" date="2008" name="BMC Genomics">
        <title>The missing link: Bordetella petrii is endowed with both the metabolic versatility of environmental bacteria and virulence traits of pathogenic Bordetellae.</title>
        <authorList>
            <person name="Gross R."/>
            <person name="Guzman C.A."/>
            <person name="Sebaihia M."/>
            <person name="Martin dos Santos V.A.P."/>
            <person name="Pieper D.H."/>
            <person name="Koebnik R."/>
            <person name="Lechner M."/>
            <person name="Bartels D."/>
            <person name="Buhrmester J."/>
            <person name="Choudhuri J.V."/>
            <person name="Ebensen T."/>
            <person name="Gaigalat L."/>
            <person name="Herrmann S."/>
            <person name="Khachane A.N."/>
            <person name="Larisch C."/>
            <person name="Link S."/>
            <person name="Linke B."/>
            <person name="Meyer F."/>
            <person name="Mormann S."/>
            <person name="Nakunst D."/>
            <person name="Rueckert C."/>
            <person name="Schneiker-Bekel S."/>
            <person name="Schulze K."/>
            <person name="Voerholter F.-J."/>
            <person name="Yevsa T."/>
            <person name="Engle J.T."/>
            <person name="Goldman W.E."/>
            <person name="Puehler A."/>
            <person name="Goebel U.B."/>
            <person name="Goesmann A."/>
            <person name="Bloecker H."/>
            <person name="Kaiser O."/>
            <person name="Martinez-Arias R."/>
        </authorList>
    </citation>
    <scope>NUCLEOTIDE SEQUENCE [LARGE SCALE GENOMIC DNA]</scope>
    <source>
        <strain>ATCC BAA-461 / DSM 12804 / CCUG 43448</strain>
    </source>
</reference>
<gene>
    <name evidence="1" type="primary">atpG</name>
    <name type="ordered locus">Bpet0341</name>
</gene>
<keyword id="KW-0066">ATP synthesis</keyword>
<keyword id="KW-0997">Cell inner membrane</keyword>
<keyword id="KW-1003">Cell membrane</keyword>
<keyword id="KW-0139">CF(1)</keyword>
<keyword id="KW-0375">Hydrogen ion transport</keyword>
<keyword id="KW-0406">Ion transport</keyword>
<keyword id="KW-0472">Membrane</keyword>
<keyword id="KW-0813">Transport</keyword>
<organism>
    <name type="scientific">Bordetella petrii (strain ATCC BAA-461 / DSM 12804 / CCUG 43448)</name>
    <dbReference type="NCBI Taxonomy" id="340100"/>
    <lineage>
        <taxon>Bacteria</taxon>
        <taxon>Pseudomonadati</taxon>
        <taxon>Pseudomonadota</taxon>
        <taxon>Betaproteobacteria</taxon>
        <taxon>Burkholderiales</taxon>
        <taxon>Alcaligenaceae</taxon>
        <taxon>Bordetella</taxon>
    </lineage>
</organism>
<dbReference type="EMBL" id="AM902716">
    <property type="protein sequence ID" value="CAP40673.1"/>
    <property type="molecule type" value="Genomic_DNA"/>
</dbReference>
<dbReference type="SMR" id="A9HY41"/>
<dbReference type="STRING" id="94624.Bpet0341"/>
<dbReference type="KEGG" id="bpt:Bpet0341"/>
<dbReference type="eggNOG" id="COG0224">
    <property type="taxonomic scope" value="Bacteria"/>
</dbReference>
<dbReference type="Proteomes" id="UP000001225">
    <property type="component" value="Chromosome"/>
</dbReference>
<dbReference type="GO" id="GO:0005886">
    <property type="term" value="C:plasma membrane"/>
    <property type="evidence" value="ECO:0007669"/>
    <property type="project" value="UniProtKB-SubCell"/>
</dbReference>
<dbReference type="GO" id="GO:0045259">
    <property type="term" value="C:proton-transporting ATP synthase complex"/>
    <property type="evidence" value="ECO:0007669"/>
    <property type="project" value="UniProtKB-KW"/>
</dbReference>
<dbReference type="GO" id="GO:0005524">
    <property type="term" value="F:ATP binding"/>
    <property type="evidence" value="ECO:0007669"/>
    <property type="project" value="UniProtKB-UniRule"/>
</dbReference>
<dbReference type="GO" id="GO:0046933">
    <property type="term" value="F:proton-transporting ATP synthase activity, rotational mechanism"/>
    <property type="evidence" value="ECO:0007669"/>
    <property type="project" value="UniProtKB-UniRule"/>
</dbReference>
<dbReference type="GO" id="GO:0042777">
    <property type="term" value="P:proton motive force-driven plasma membrane ATP synthesis"/>
    <property type="evidence" value="ECO:0007669"/>
    <property type="project" value="UniProtKB-UniRule"/>
</dbReference>
<dbReference type="CDD" id="cd12151">
    <property type="entry name" value="F1-ATPase_gamma"/>
    <property type="match status" value="1"/>
</dbReference>
<dbReference type="FunFam" id="1.10.287.80:FF:000005">
    <property type="entry name" value="ATP synthase gamma chain"/>
    <property type="match status" value="1"/>
</dbReference>
<dbReference type="Gene3D" id="3.40.1380.10">
    <property type="match status" value="1"/>
</dbReference>
<dbReference type="Gene3D" id="1.10.287.80">
    <property type="entry name" value="ATP synthase, gamma subunit, helix hairpin domain"/>
    <property type="match status" value="2"/>
</dbReference>
<dbReference type="HAMAP" id="MF_00815">
    <property type="entry name" value="ATP_synth_gamma_bact"/>
    <property type="match status" value="1"/>
</dbReference>
<dbReference type="InterPro" id="IPR035968">
    <property type="entry name" value="ATP_synth_F1_ATPase_gsu"/>
</dbReference>
<dbReference type="InterPro" id="IPR000131">
    <property type="entry name" value="ATP_synth_F1_gsu"/>
</dbReference>
<dbReference type="InterPro" id="IPR023632">
    <property type="entry name" value="ATP_synth_F1_gsu_CS"/>
</dbReference>
<dbReference type="NCBIfam" id="TIGR01146">
    <property type="entry name" value="ATPsyn_F1gamma"/>
    <property type="match status" value="1"/>
</dbReference>
<dbReference type="NCBIfam" id="NF004144">
    <property type="entry name" value="PRK05621.1-1"/>
    <property type="match status" value="1"/>
</dbReference>
<dbReference type="PANTHER" id="PTHR11693">
    <property type="entry name" value="ATP SYNTHASE GAMMA CHAIN"/>
    <property type="match status" value="1"/>
</dbReference>
<dbReference type="PANTHER" id="PTHR11693:SF22">
    <property type="entry name" value="ATP SYNTHASE SUBUNIT GAMMA, MITOCHONDRIAL"/>
    <property type="match status" value="1"/>
</dbReference>
<dbReference type="Pfam" id="PF00231">
    <property type="entry name" value="ATP-synt"/>
    <property type="match status" value="1"/>
</dbReference>
<dbReference type="PRINTS" id="PR00126">
    <property type="entry name" value="ATPASEGAMMA"/>
</dbReference>
<dbReference type="SUPFAM" id="SSF52943">
    <property type="entry name" value="ATP synthase (F1-ATPase), gamma subunit"/>
    <property type="match status" value="1"/>
</dbReference>
<dbReference type="PROSITE" id="PS00153">
    <property type="entry name" value="ATPASE_GAMMA"/>
    <property type="match status" value="1"/>
</dbReference>
<name>ATPG_BORPD</name>
<proteinExistence type="inferred from homology"/>